<keyword id="KW-0025">Alternative splicing</keyword>
<keyword id="KW-1003">Cell membrane</keyword>
<keyword id="KW-0963">Cytoplasm</keyword>
<keyword id="KW-0333">Golgi apparatus</keyword>
<keyword id="KW-0406">Ion transport</keyword>
<keyword id="KW-0472">Membrane</keyword>
<keyword id="KW-0539">Nucleus</keyword>
<keyword id="KW-1185">Reference proteome</keyword>
<keyword id="KW-0812">Transmembrane</keyword>
<keyword id="KW-1133">Transmembrane helix</keyword>
<keyword id="KW-0813">Transport</keyword>
<keyword id="KW-0862">Zinc</keyword>
<keyword id="KW-0864">Zinc transport</keyword>
<comment type="function">
    <text evidence="3">Zinc importer that regulates cytosolic zinc concentration either via zinc influx from the extracellular compartment or efflux from intracellular organelles such as Golgi apparatus. May transport copper ions as well. The transport mechanism remains to be elucidated.</text>
</comment>
<comment type="catalytic activity">
    <reaction evidence="3">
        <text>Zn(2+)(in) = Zn(2+)(out)</text>
        <dbReference type="Rhea" id="RHEA:29351"/>
        <dbReference type="ChEBI" id="CHEBI:29105"/>
    </reaction>
    <physiologicalReaction direction="right-to-left" evidence="9">
        <dbReference type="Rhea" id="RHEA:29353"/>
    </physiologicalReaction>
</comment>
<comment type="catalytic activity">
    <reaction evidence="3">
        <text>Cu(2+)(in) = Cu(2+)(out)</text>
        <dbReference type="Rhea" id="RHEA:28703"/>
        <dbReference type="ChEBI" id="CHEBI:29036"/>
    </reaction>
    <physiologicalReaction direction="right-to-left" evidence="9">
        <dbReference type="Rhea" id="RHEA:28705"/>
    </physiologicalReaction>
</comment>
<comment type="subcellular location">
    <subcellularLocation>
        <location evidence="4">Cell membrane</location>
        <topology evidence="1">Multi-pass membrane protein</topology>
    </subcellularLocation>
    <subcellularLocation>
        <location evidence="4">Nucleus</location>
    </subcellularLocation>
    <subcellularLocation>
        <location evidence="4">Cytoplasm</location>
    </subcellularLocation>
    <subcellularLocation>
        <location evidence="2">Golgi apparatus</location>
    </subcellularLocation>
</comment>
<comment type="alternative products">
    <event type="alternative splicing"/>
    <isoform>
        <id>Q8BWY7-1</id>
        <name>1</name>
        <sequence type="displayed"/>
    </isoform>
    <isoform>
        <id>Q8BWY7-2</id>
        <name>2</name>
        <sequence type="described" ref="VSP_028977 VSP_028978"/>
    </isoform>
    <isoform>
        <id>Q8BWY7-3</id>
        <name>3</name>
        <sequence type="described" ref="VSP_028978"/>
    </isoform>
</comment>
<comment type="tissue specificity">
    <text evidence="3 4">Highly expressed in the testes and portions of the digestive system including the stomach, ileum and cecum. In contrast, expressed at very low levels in liver, duodenum, jejunum, and colon.</text>
</comment>
<comment type="induction">
    <text evidence="2 3">Transcriptionally up-regulated by zinc (PubMed:23643525). Up-regulated during lactation.</text>
</comment>
<comment type="similarity">
    <text evidence="8">Belongs to the ZIP transporter (TC 2.A.5) family.</text>
</comment>
<comment type="sequence caution" evidence="8">
    <conflict type="erroneous initiation">
        <sequence resource="EMBL-CDS" id="AAH04643"/>
    </conflict>
</comment>
<comment type="sequence caution" evidence="8">
    <conflict type="miscellaneous discrepancy">
        <sequence resource="EMBL-CDS" id="AAH04643"/>
    </conflict>
    <text>Contaminating sequence. Sequence of unknown origin in the N-terminal part.</text>
</comment>
<reference key="1">
    <citation type="journal article" date="2005" name="Science">
        <title>The transcriptional landscape of the mammalian genome.</title>
        <authorList>
            <person name="Carninci P."/>
            <person name="Kasukawa T."/>
            <person name="Katayama S."/>
            <person name="Gough J."/>
            <person name="Frith M.C."/>
            <person name="Maeda N."/>
            <person name="Oyama R."/>
            <person name="Ravasi T."/>
            <person name="Lenhard B."/>
            <person name="Wells C."/>
            <person name="Kodzius R."/>
            <person name="Shimokawa K."/>
            <person name="Bajic V.B."/>
            <person name="Brenner S.E."/>
            <person name="Batalov S."/>
            <person name="Forrest A.R."/>
            <person name="Zavolan M."/>
            <person name="Davis M.J."/>
            <person name="Wilming L.G."/>
            <person name="Aidinis V."/>
            <person name="Allen J.E."/>
            <person name="Ambesi-Impiombato A."/>
            <person name="Apweiler R."/>
            <person name="Aturaliya R.N."/>
            <person name="Bailey T.L."/>
            <person name="Bansal M."/>
            <person name="Baxter L."/>
            <person name="Beisel K.W."/>
            <person name="Bersano T."/>
            <person name="Bono H."/>
            <person name="Chalk A.M."/>
            <person name="Chiu K.P."/>
            <person name="Choudhary V."/>
            <person name="Christoffels A."/>
            <person name="Clutterbuck D.R."/>
            <person name="Crowe M.L."/>
            <person name="Dalla E."/>
            <person name="Dalrymple B.P."/>
            <person name="de Bono B."/>
            <person name="Della Gatta G."/>
            <person name="di Bernardo D."/>
            <person name="Down T."/>
            <person name="Engstrom P."/>
            <person name="Fagiolini M."/>
            <person name="Faulkner G."/>
            <person name="Fletcher C.F."/>
            <person name="Fukushima T."/>
            <person name="Furuno M."/>
            <person name="Futaki S."/>
            <person name="Gariboldi M."/>
            <person name="Georgii-Hemming P."/>
            <person name="Gingeras T.R."/>
            <person name="Gojobori T."/>
            <person name="Green R.E."/>
            <person name="Gustincich S."/>
            <person name="Harbers M."/>
            <person name="Hayashi Y."/>
            <person name="Hensch T.K."/>
            <person name="Hirokawa N."/>
            <person name="Hill D."/>
            <person name="Huminiecki L."/>
            <person name="Iacono M."/>
            <person name="Ikeo K."/>
            <person name="Iwama A."/>
            <person name="Ishikawa T."/>
            <person name="Jakt M."/>
            <person name="Kanapin A."/>
            <person name="Katoh M."/>
            <person name="Kawasawa Y."/>
            <person name="Kelso J."/>
            <person name="Kitamura H."/>
            <person name="Kitano H."/>
            <person name="Kollias G."/>
            <person name="Krishnan S.P."/>
            <person name="Kruger A."/>
            <person name="Kummerfeld S.K."/>
            <person name="Kurochkin I.V."/>
            <person name="Lareau L.F."/>
            <person name="Lazarevic D."/>
            <person name="Lipovich L."/>
            <person name="Liu J."/>
            <person name="Liuni S."/>
            <person name="McWilliam S."/>
            <person name="Madan Babu M."/>
            <person name="Madera M."/>
            <person name="Marchionni L."/>
            <person name="Matsuda H."/>
            <person name="Matsuzawa S."/>
            <person name="Miki H."/>
            <person name="Mignone F."/>
            <person name="Miyake S."/>
            <person name="Morris K."/>
            <person name="Mottagui-Tabar S."/>
            <person name="Mulder N."/>
            <person name="Nakano N."/>
            <person name="Nakauchi H."/>
            <person name="Ng P."/>
            <person name="Nilsson R."/>
            <person name="Nishiguchi S."/>
            <person name="Nishikawa S."/>
            <person name="Nori F."/>
            <person name="Ohara O."/>
            <person name="Okazaki Y."/>
            <person name="Orlando V."/>
            <person name="Pang K.C."/>
            <person name="Pavan W.J."/>
            <person name="Pavesi G."/>
            <person name="Pesole G."/>
            <person name="Petrovsky N."/>
            <person name="Piazza S."/>
            <person name="Reed J."/>
            <person name="Reid J.F."/>
            <person name="Ring B.Z."/>
            <person name="Ringwald M."/>
            <person name="Rost B."/>
            <person name="Ruan Y."/>
            <person name="Salzberg S.L."/>
            <person name="Sandelin A."/>
            <person name="Schneider C."/>
            <person name="Schoenbach C."/>
            <person name="Sekiguchi K."/>
            <person name="Semple C.A."/>
            <person name="Seno S."/>
            <person name="Sessa L."/>
            <person name="Sheng Y."/>
            <person name="Shibata Y."/>
            <person name="Shimada H."/>
            <person name="Shimada K."/>
            <person name="Silva D."/>
            <person name="Sinclair B."/>
            <person name="Sperling S."/>
            <person name="Stupka E."/>
            <person name="Sugiura K."/>
            <person name="Sultana R."/>
            <person name="Takenaka Y."/>
            <person name="Taki K."/>
            <person name="Tammoja K."/>
            <person name="Tan S.L."/>
            <person name="Tang S."/>
            <person name="Taylor M.S."/>
            <person name="Tegner J."/>
            <person name="Teichmann S.A."/>
            <person name="Ueda H.R."/>
            <person name="van Nimwegen E."/>
            <person name="Verardo R."/>
            <person name="Wei C.L."/>
            <person name="Yagi K."/>
            <person name="Yamanishi H."/>
            <person name="Zabarovsky E."/>
            <person name="Zhu S."/>
            <person name="Zimmer A."/>
            <person name="Hide W."/>
            <person name="Bult C."/>
            <person name="Grimmond S.M."/>
            <person name="Teasdale R.D."/>
            <person name="Liu E.T."/>
            <person name="Brusic V."/>
            <person name="Quackenbush J."/>
            <person name="Wahlestedt C."/>
            <person name="Mattick J.S."/>
            <person name="Hume D.A."/>
            <person name="Kai C."/>
            <person name="Sasaki D."/>
            <person name="Tomaru Y."/>
            <person name="Fukuda S."/>
            <person name="Kanamori-Katayama M."/>
            <person name="Suzuki M."/>
            <person name="Aoki J."/>
            <person name="Arakawa T."/>
            <person name="Iida J."/>
            <person name="Imamura K."/>
            <person name="Itoh M."/>
            <person name="Kato T."/>
            <person name="Kawaji H."/>
            <person name="Kawagashira N."/>
            <person name="Kawashima T."/>
            <person name="Kojima M."/>
            <person name="Kondo S."/>
            <person name="Konno H."/>
            <person name="Nakano K."/>
            <person name="Ninomiya N."/>
            <person name="Nishio T."/>
            <person name="Okada M."/>
            <person name="Plessy C."/>
            <person name="Shibata K."/>
            <person name="Shiraki T."/>
            <person name="Suzuki S."/>
            <person name="Tagami M."/>
            <person name="Waki K."/>
            <person name="Watahiki A."/>
            <person name="Okamura-Oho Y."/>
            <person name="Suzuki H."/>
            <person name="Kawai J."/>
            <person name="Hayashizaki Y."/>
        </authorList>
    </citation>
    <scope>NUCLEOTIDE SEQUENCE [LARGE SCALE MRNA] (ISOFORMS 1 AND 3)</scope>
    <source>
        <strain>C57BL/6J</strain>
        <strain>NOD</strain>
        <tissue>Pancreas</tissue>
        <tissue>Vagina</tissue>
    </source>
</reference>
<reference key="2">
    <citation type="journal article" date="2009" name="PLoS Biol.">
        <title>Lineage-specific biology revealed by a finished genome assembly of the mouse.</title>
        <authorList>
            <person name="Church D.M."/>
            <person name="Goodstadt L."/>
            <person name="Hillier L.W."/>
            <person name="Zody M.C."/>
            <person name="Goldstein S."/>
            <person name="She X."/>
            <person name="Bult C.J."/>
            <person name="Agarwala R."/>
            <person name="Cherry J.L."/>
            <person name="DiCuccio M."/>
            <person name="Hlavina W."/>
            <person name="Kapustin Y."/>
            <person name="Meric P."/>
            <person name="Maglott D."/>
            <person name="Birtle Z."/>
            <person name="Marques A.C."/>
            <person name="Graves T."/>
            <person name="Zhou S."/>
            <person name="Teague B."/>
            <person name="Potamousis K."/>
            <person name="Churas C."/>
            <person name="Place M."/>
            <person name="Herschleb J."/>
            <person name="Runnheim R."/>
            <person name="Forrest D."/>
            <person name="Amos-Landgraf J."/>
            <person name="Schwartz D.C."/>
            <person name="Cheng Z."/>
            <person name="Lindblad-Toh K."/>
            <person name="Eichler E.E."/>
            <person name="Ponting C.P."/>
        </authorList>
    </citation>
    <scope>NUCLEOTIDE SEQUENCE [LARGE SCALE GENOMIC DNA]</scope>
    <source>
        <strain>C57BL/6J</strain>
    </source>
</reference>
<reference key="3">
    <citation type="journal article" date="2004" name="Genome Res.">
        <title>The status, quality, and expansion of the NIH full-length cDNA project: the Mammalian Gene Collection (MGC).</title>
        <authorList>
            <consortium name="The MGC Project Team"/>
        </authorList>
    </citation>
    <scope>NUCLEOTIDE SEQUENCE [LARGE SCALE MRNA] (ISOFORMS 2 AND 3)</scope>
    <source>
        <strain>FVB/N</strain>
        <tissue>Colon</tissue>
        <tissue>Mammary tumor</tissue>
    </source>
</reference>
<reference key="4">
    <citation type="journal article" date="2010" name="Cell">
        <title>A tissue-specific atlas of mouse protein phosphorylation and expression.</title>
        <authorList>
            <person name="Huttlin E.L."/>
            <person name="Jedrychowski M.P."/>
            <person name="Elias J.E."/>
            <person name="Goswami T."/>
            <person name="Rad R."/>
            <person name="Beausoleil S.A."/>
            <person name="Villen J."/>
            <person name="Haas W."/>
            <person name="Sowa M.E."/>
            <person name="Gygi S.P."/>
        </authorList>
    </citation>
    <scope>IDENTIFICATION BY MASS SPECTROMETRY [LARGE SCALE ANALYSIS]</scope>
    <source>
        <tissue>Kidney</tissue>
        <tissue>Liver</tissue>
        <tissue>Pancreas</tissue>
    </source>
</reference>
<reference key="5">
    <citation type="journal article" date="2012" name="J. Cell. Physiol.">
        <title>Mapping the zinc-transporting system in mammary cells: molecular analysis reveals a phenotype-dependent zinc-transporting network during lactation.</title>
        <authorList>
            <person name="Kelleher S.L."/>
            <person name="Velasquez V."/>
            <person name="Croxford T.P."/>
            <person name="McCormick N.H."/>
            <person name="Lopez V."/>
            <person name="MacDavid J."/>
        </authorList>
    </citation>
    <scope>SUBCELLULAR LOCATION</scope>
    <scope>INDUCTION</scope>
</reference>
<reference key="6">
    <citation type="journal article" date="2013" name="J. Nutr.">
        <title>Gastric and colonic zinc transporter ZIP11 (Slc39a11) in mice responds to dietary zinc and exhibits nuclear localization.</title>
        <authorList>
            <person name="Martin A.B."/>
            <person name="Aydemir T.B."/>
            <person name="Guthrie G.J."/>
            <person name="Samuelson D.A."/>
            <person name="Chang S.M."/>
            <person name="Cousins R.J."/>
        </authorList>
    </citation>
    <scope>SUBCELLULAR LOCATION</scope>
    <scope>TISSUE SPECIFICITY</scope>
</reference>
<reference key="7">
    <citation type="journal article" date="2013" name="J. Nutr. Biochem.">
        <title>Characterization of the GufA subfamily member SLC39A11/Zip11 as a zinc transporter.</title>
        <authorList>
            <person name="Yu Y."/>
            <person name="Wu A."/>
            <person name="Zhang Z."/>
            <person name="Yan G."/>
            <person name="Zhang F."/>
            <person name="Zhang L."/>
            <person name="Shen X."/>
            <person name="Hu R."/>
            <person name="Zhang Y."/>
            <person name="Zhang K."/>
            <person name="Wang F."/>
        </authorList>
    </citation>
    <scope>FUNCTION</scope>
    <scope>TRANSPORTER ACTIVITY</scope>
    <scope>TISSUE SPECIFICITY</scope>
    <scope>INDUCTION BY ZINC</scope>
</reference>
<sequence length="342" mass="35466">MLQGYSSVVQALLGTFFTWAMTAAGAALVFIFSSGQRRILDGSLGFAAGVMLAASYWSLLAPAVEMATSSGGFGAFAFFPVAVGFTLGAAFVYLADLLMPHLGATEDPQTALALNLDPALMKKSDPRDPTSLLFPESELSIRIGSTGLLSDKRENGEVYQRKKVAATDLAEGVAPSGSMHGSSGQPGGSSWRRIALLILAITIHNIPEGLAVGVGFGAVEKTASATFESARNLAIGIGIQNFPEGLAVSLPLRGAGFSTWKAFWYGQLSGMVEPLAGVFGAFAVVLAEPILPYALAFAAGAMVYVVMDDIIPEAQISGNGKLASWASILGFVVMMSLDVGLG</sequence>
<feature type="chain" id="PRO_0000308411" description="Zinc transporter ZIP11">
    <location>
        <begin position="1"/>
        <end position="342"/>
    </location>
</feature>
<feature type="transmembrane region" description="Helical" evidence="1">
    <location>
        <begin position="12"/>
        <end position="32"/>
    </location>
</feature>
<feature type="transmembrane region" description="Helical" evidence="1">
    <location>
        <begin position="44"/>
        <end position="64"/>
    </location>
</feature>
<feature type="transmembrane region" description="Helical" evidence="1">
    <location>
        <begin position="72"/>
        <end position="92"/>
    </location>
</feature>
<feature type="transmembrane region" description="Helical" evidence="1">
    <location>
        <begin position="194"/>
        <end position="214"/>
    </location>
</feature>
<feature type="transmembrane region" description="Helical" evidence="1">
    <location>
        <begin position="263"/>
        <end position="285"/>
    </location>
</feature>
<feature type="transmembrane region" description="Helical" evidence="1">
    <location>
        <begin position="290"/>
        <end position="307"/>
    </location>
</feature>
<feature type="transmembrane region" description="Helical" evidence="1">
    <location>
        <begin position="322"/>
        <end position="342"/>
    </location>
</feature>
<feature type="splice variant" id="VSP_028977" description="In isoform 2." evidence="5">
    <original>L</original>
    <variation>LLQVSFLPSGDCKMPTATKTPLLGRTRAVELLGGNQ</variation>
    <location>
        <position position="102"/>
    </location>
</feature>
<feature type="splice variant" id="VSP_028978" description="In isoform 2 and isoform 3." evidence="5 6">
    <location>
        <begin position="144"/>
        <end position="150"/>
    </location>
</feature>
<feature type="sequence conflict" description="In Ref. 3; AAH19647." evidence="8" ref="3">
    <original>T</original>
    <variation>S</variation>
    <location>
        <position position="22"/>
    </location>
</feature>
<feature type="sequence conflict" description="In Ref. 1; BAC29664." evidence="8" ref="1">
    <original>G</original>
    <variation>V</variation>
    <location>
        <position position="49"/>
    </location>
</feature>
<accession>Q8BWY7</accession>
<accession>Q8BZ08</accession>
<accession>Q8K0E0</accession>
<accession>Q8VE72</accession>
<accession>Q99KI2</accession>
<accession>Q9D8J0</accession>
<proteinExistence type="evidence at protein level"/>
<evidence type="ECO:0000255" key="1"/>
<evidence type="ECO:0000269" key="2">
    <source>
    </source>
</evidence>
<evidence type="ECO:0000269" key="3">
    <source>
    </source>
</evidence>
<evidence type="ECO:0000269" key="4">
    <source>
    </source>
</evidence>
<evidence type="ECO:0000303" key="5">
    <source>
    </source>
</evidence>
<evidence type="ECO:0000303" key="6">
    <source>
    </source>
</evidence>
<evidence type="ECO:0000303" key="7">
    <source>
    </source>
</evidence>
<evidence type="ECO:0000305" key="8"/>
<evidence type="ECO:0000305" key="9">
    <source>
    </source>
</evidence>
<dbReference type="EMBL" id="AK007986">
    <property type="protein sequence ID" value="BAB25390.1"/>
    <property type="molecule type" value="mRNA"/>
</dbReference>
<dbReference type="EMBL" id="AK036999">
    <property type="protein sequence ID" value="BAC29664.1"/>
    <property type="molecule type" value="mRNA"/>
</dbReference>
<dbReference type="EMBL" id="AK049368">
    <property type="protein sequence ID" value="BAC33713.1"/>
    <property type="molecule type" value="mRNA"/>
</dbReference>
<dbReference type="EMBL" id="AK170673">
    <property type="protein sequence ID" value="BAE41950.1"/>
    <property type="molecule type" value="mRNA"/>
</dbReference>
<dbReference type="EMBL" id="AL596104">
    <property type="status" value="NOT_ANNOTATED_CDS"/>
    <property type="molecule type" value="Genomic_DNA"/>
</dbReference>
<dbReference type="EMBL" id="AL603705">
    <property type="status" value="NOT_ANNOTATED_CDS"/>
    <property type="molecule type" value="Genomic_DNA"/>
</dbReference>
<dbReference type="EMBL" id="AL604025">
    <property type="status" value="NOT_ANNOTATED_CDS"/>
    <property type="molecule type" value="Genomic_DNA"/>
</dbReference>
<dbReference type="EMBL" id="BC004643">
    <property type="protein sequence ID" value="AAH04643.1"/>
    <property type="status" value="ALT_INIT"/>
    <property type="molecule type" value="mRNA"/>
</dbReference>
<dbReference type="EMBL" id="BC019647">
    <property type="protein sequence ID" value="AAH19647.1"/>
    <property type="molecule type" value="mRNA"/>
</dbReference>
<dbReference type="EMBL" id="BC031751">
    <property type="protein sequence ID" value="AAH31751.1"/>
    <property type="molecule type" value="mRNA"/>
</dbReference>
<dbReference type="CCDS" id="CCDS36363.1">
    <molecule id="Q8BWY7-3"/>
</dbReference>
<dbReference type="CCDS" id="CCDS48975.1">
    <molecule id="Q8BWY7-1"/>
</dbReference>
<dbReference type="CCDS" id="CCDS88280.1">
    <molecule id="Q8BWY7-2"/>
</dbReference>
<dbReference type="RefSeq" id="NP_001159975.1">
    <molecule id="Q8BWY7-1"/>
    <property type="nucleotide sequence ID" value="NM_001166503.1"/>
</dbReference>
<dbReference type="RefSeq" id="NP_001349867.1">
    <molecule id="Q8BWY7-2"/>
    <property type="nucleotide sequence ID" value="NM_001362938.1"/>
</dbReference>
<dbReference type="RefSeq" id="NP_001349868.1">
    <molecule id="Q8BWY7-1"/>
    <property type="nucleotide sequence ID" value="NM_001362939.1"/>
</dbReference>
<dbReference type="RefSeq" id="NP_001349869.1">
    <molecule id="Q8BWY7-1"/>
    <property type="nucleotide sequence ID" value="NM_001362940.1"/>
</dbReference>
<dbReference type="RefSeq" id="NP_001349870.1">
    <molecule id="Q8BWY7-3"/>
    <property type="nucleotide sequence ID" value="NM_001362941.1"/>
</dbReference>
<dbReference type="RefSeq" id="NP_081492.4">
    <molecule id="Q8BWY7-3"/>
    <property type="nucleotide sequence ID" value="NM_027216.5"/>
</dbReference>
<dbReference type="RefSeq" id="XP_006534190.1">
    <property type="nucleotide sequence ID" value="XM_006534127.3"/>
</dbReference>
<dbReference type="RefSeq" id="XP_006534193.1">
    <molecule id="Q8BWY7-1"/>
    <property type="nucleotide sequence ID" value="XM_006534130.4"/>
</dbReference>
<dbReference type="RefSeq" id="XP_006534197.1">
    <property type="nucleotide sequence ID" value="XM_006534134.3"/>
</dbReference>
<dbReference type="RefSeq" id="XP_011247533.1">
    <molecule id="Q8BWY7-1"/>
    <property type="nucleotide sequence ID" value="XM_011249231.3"/>
</dbReference>
<dbReference type="RefSeq" id="XP_011247534.1">
    <property type="nucleotide sequence ID" value="XM_011249232.1"/>
</dbReference>
<dbReference type="RefSeq" id="XP_017170232.1">
    <property type="nucleotide sequence ID" value="XM_017314743.1"/>
</dbReference>
<dbReference type="RefSeq" id="XP_030102140.1">
    <molecule id="Q8BWY7-1"/>
    <property type="nucleotide sequence ID" value="XM_030246280.2"/>
</dbReference>
<dbReference type="RefSeq" id="XP_030102141.1">
    <molecule id="Q8BWY7-1"/>
    <property type="nucleotide sequence ID" value="XM_030246281.2"/>
</dbReference>
<dbReference type="RefSeq" id="XP_030102142.1">
    <molecule id="Q8BWY7-1"/>
    <property type="nucleotide sequence ID" value="XM_030246282.2"/>
</dbReference>
<dbReference type="RefSeq" id="XP_030102143.1">
    <molecule id="Q8BWY7-3"/>
    <property type="nucleotide sequence ID" value="XM_030246283.2"/>
</dbReference>
<dbReference type="RefSeq" id="XP_030102144.1">
    <molecule id="Q8BWY7-3"/>
    <property type="nucleotide sequence ID" value="XM_030246284.2"/>
</dbReference>
<dbReference type="RefSeq" id="XP_030102145.1">
    <molecule id="Q8BWY7-3"/>
    <property type="nucleotide sequence ID" value="XM_030246285.2"/>
</dbReference>
<dbReference type="RefSeq" id="XP_030102146.1">
    <molecule id="Q8BWY7-3"/>
    <property type="nucleotide sequence ID" value="XM_030246286.2"/>
</dbReference>
<dbReference type="RefSeq" id="XP_030102147.1">
    <molecule id="Q8BWY7-3"/>
    <property type="nucleotide sequence ID" value="XM_030246287.2"/>
</dbReference>
<dbReference type="RefSeq" id="XP_030102148.1">
    <molecule id="Q8BWY7-2"/>
    <property type="nucleotide sequence ID" value="XM_030246288.1"/>
</dbReference>
<dbReference type="RefSeq" id="XP_036012860.1">
    <molecule id="Q8BWY7-1"/>
    <property type="nucleotide sequence ID" value="XM_036156967.1"/>
</dbReference>
<dbReference type="RefSeq" id="XP_036012861.1">
    <molecule id="Q8BWY7-1"/>
    <property type="nucleotide sequence ID" value="XM_036156968.1"/>
</dbReference>
<dbReference type="RefSeq" id="XP_036012862.1">
    <molecule id="Q8BWY7-1"/>
    <property type="nucleotide sequence ID" value="XM_036156969.1"/>
</dbReference>
<dbReference type="SMR" id="Q8BWY7"/>
<dbReference type="BioGRID" id="213690">
    <property type="interactions" value="1"/>
</dbReference>
<dbReference type="FunCoup" id="Q8BWY7">
    <property type="interactions" value="1357"/>
</dbReference>
<dbReference type="IntAct" id="Q8BWY7">
    <property type="interactions" value="1"/>
</dbReference>
<dbReference type="MINT" id="Q8BWY7"/>
<dbReference type="STRING" id="10090.ENSMUSP00000102244"/>
<dbReference type="iPTMnet" id="Q8BWY7"/>
<dbReference type="PhosphoSitePlus" id="Q8BWY7"/>
<dbReference type="PaxDb" id="10090-ENSMUSP00000102244"/>
<dbReference type="ProteomicsDB" id="260787">
    <molecule id="Q8BWY7-1"/>
</dbReference>
<dbReference type="ProteomicsDB" id="260788">
    <molecule id="Q8BWY7-2"/>
</dbReference>
<dbReference type="ProteomicsDB" id="260789">
    <molecule id="Q8BWY7-3"/>
</dbReference>
<dbReference type="Pumba" id="Q8BWY7"/>
<dbReference type="Antibodypedia" id="31896">
    <property type="antibodies" value="114 antibodies from 26 providers"/>
</dbReference>
<dbReference type="DNASU" id="69806"/>
<dbReference type="Ensembl" id="ENSMUST00000042657.16">
    <molecule id="Q8BWY7-2"/>
    <property type="protein sequence ID" value="ENSMUSP00000037331.10"/>
    <property type="gene ID" value="ENSMUSG00000041654.16"/>
</dbReference>
<dbReference type="Ensembl" id="ENSMUST00000071539.10">
    <molecule id="Q8BWY7-3"/>
    <property type="protein sequence ID" value="ENSMUSP00000071469.4"/>
    <property type="gene ID" value="ENSMUSG00000041654.16"/>
</dbReference>
<dbReference type="Ensembl" id="ENSMUST00000106633.10">
    <molecule id="Q8BWY7-1"/>
    <property type="protein sequence ID" value="ENSMUSP00000102244.4"/>
    <property type="gene ID" value="ENSMUSG00000041654.16"/>
</dbReference>
<dbReference type="GeneID" id="69806"/>
<dbReference type="KEGG" id="mmu:69806"/>
<dbReference type="UCSC" id="uc007mem.2">
    <molecule id="Q8BWY7-3"/>
    <property type="organism name" value="mouse"/>
</dbReference>
<dbReference type="UCSC" id="uc007men.2">
    <molecule id="Q8BWY7-1"/>
    <property type="organism name" value="mouse"/>
</dbReference>
<dbReference type="AGR" id="MGI:1917056"/>
<dbReference type="CTD" id="201266"/>
<dbReference type="MGI" id="MGI:1917056">
    <property type="gene designation" value="Slc39a11"/>
</dbReference>
<dbReference type="VEuPathDB" id="HostDB:ENSMUSG00000041654"/>
<dbReference type="eggNOG" id="KOG2474">
    <property type="taxonomic scope" value="Eukaryota"/>
</dbReference>
<dbReference type="GeneTree" id="ENSGT00390000006167"/>
<dbReference type="HOGENOM" id="CLU_015114_1_1_1"/>
<dbReference type="InParanoid" id="Q8BWY7"/>
<dbReference type="OMA" id="MIFVVIE"/>
<dbReference type="PhylomeDB" id="Q8BWY7"/>
<dbReference type="TreeFam" id="TF105905"/>
<dbReference type="BioGRID-ORCS" id="69806">
    <property type="hits" value="4 hits in 79 CRISPR screens"/>
</dbReference>
<dbReference type="ChiTaRS" id="Slc39a11">
    <property type="organism name" value="mouse"/>
</dbReference>
<dbReference type="PRO" id="PR:Q8BWY7"/>
<dbReference type="Proteomes" id="UP000000589">
    <property type="component" value="Chromosome 11"/>
</dbReference>
<dbReference type="RNAct" id="Q8BWY7">
    <property type="molecule type" value="protein"/>
</dbReference>
<dbReference type="Bgee" id="ENSMUSG00000041654">
    <property type="expression patterns" value="Expressed in epithelium of stomach and 230 other cell types or tissues"/>
</dbReference>
<dbReference type="ExpressionAtlas" id="Q8BWY7">
    <property type="expression patterns" value="baseline and differential"/>
</dbReference>
<dbReference type="GO" id="GO:0005737">
    <property type="term" value="C:cytoplasm"/>
    <property type="evidence" value="ECO:0000314"/>
    <property type="project" value="UniProtKB"/>
</dbReference>
<dbReference type="GO" id="GO:0005794">
    <property type="term" value="C:Golgi apparatus"/>
    <property type="evidence" value="ECO:0000314"/>
    <property type="project" value="UniProtKB"/>
</dbReference>
<dbReference type="GO" id="GO:0005634">
    <property type="term" value="C:nucleus"/>
    <property type="evidence" value="ECO:0000314"/>
    <property type="project" value="UniProtKB"/>
</dbReference>
<dbReference type="GO" id="GO:0005886">
    <property type="term" value="C:plasma membrane"/>
    <property type="evidence" value="ECO:0000314"/>
    <property type="project" value="UniProtKB"/>
</dbReference>
<dbReference type="GO" id="GO:0005375">
    <property type="term" value="F:copper ion transmembrane transporter activity"/>
    <property type="evidence" value="ECO:0000314"/>
    <property type="project" value="UniProtKB"/>
</dbReference>
<dbReference type="GO" id="GO:0005385">
    <property type="term" value="F:zinc ion transmembrane transporter activity"/>
    <property type="evidence" value="ECO:0000314"/>
    <property type="project" value="UniProtKB"/>
</dbReference>
<dbReference type="GO" id="GO:0071578">
    <property type="term" value="P:zinc ion import across plasma membrane"/>
    <property type="evidence" value="ECO:0000315"/>
    <property type="project" value="UniProtKB"/>
</dbReference>
<dbReference type="InterPro" id="IPR003689">
    <property type="entry name" value="ZIP"/>
</dbReference>
<dbReference type="PANTHER" id="PTHR11040:SF211">
    <property type="entry name" value="ZINC TRANSPORTER ZIP11"/>
    <property type="match status" value="1"/>
</dbReference>
<dbReference type="PANTHER" id="PTHR11040">
    <property type="entry name" value="ZINC/IRON TRANSPORTER"/>
    <property type="match status" value="1"/>
</dbReference>
<dbReference type="Pfam" id="PF02535">
    <property type="entry name" value="Zip"/>
    <property type="match status" value="1"/>
</dbReference>
<organism>
    <name type="scientific">Mus musculus</name>
    <name type="common">Mouse</name>
    <dbReference type="NCBI Taxonomy" id="10090"/>
    <lineage>
        <taxon>Eukaryota</taxon>
        <taxon>Metazoa</taxon>
        <taxon>Chordata</taxon>
        <taxon>Craniata</taxon>
        <taxon>Vertebrata</taxon>
        <taxon>Euteleostomi</taxon>
        <taxon>Mammalia</taxon>
        <taxon>Eutheria</taxon>
        <taxon>Euarchontoglires</taxon>
        <taxon>Glires</taxon>
        <taxon>Rodentia</taxon>
        <taxon>Myomorpha</taxon>
        <taxon>Muroidea</taxon>
        <taxon>Muridae</taxon>
        <taxon>Murinae</taxon>
        <taxon>Mus</taxon>
        <taxon>Mus</taxon>
    </lineage>
</organism>
<name>S39AB_MOUSE</name>
<gene>
    <name type="primary">Slc39a11</name>
    <name evidence="7" type="synonym">Zip11</name>
</gene>
<protein>
    <recommendedName>
        <fullName>Zinc transporter ZIP11</fullName>
    </recommendedName>
    <alternativeName>
        <fullName>Solute carrier family 39 member 11</fullName>
    </alternativeName>
    <alternativeName>
        <fullName>Zrt- and Irt-like protein 11</fullName>
        <shortName>ZIP-11</shortName>
    </alternativeName>
</protein>